<evidence type="ECO:0000255" key="1">
    <source>
        <dbReference type="HAMAP-Rule" id="MF_00017"/>
    </source>
</evidence>
<feature type="chain" id="PRO_0000322887" description="Recombination protein RecR">
    <location>
        <begin position="1"/>
        <end position="195"/>
    </location>
</feature>
<feature type="domain" description="Toprim" evidence="1">
    <location>
        <begin position="76"/>
        <end position="171"/>
    </location>
</feature>
<feature type="zinc finger region" description="C4-type" evidence="1">
    <location>
        <begin position="53"/>
        <end position="68"/>
    </location>
</feature>
<reference key="1">
    <citation type="journal article" date="2006" name="J. Bacteriol.">
        <title>The genome of the obligately intracellular bacterium Ehrlichia canis reveals themes of complex membrane structure and immune evasion strategies.</title>
        <authorList>
            <person name="Mavromatis K."/>
            <person name="Doyle C.K."/>
            <person name="Lykidis A."/>
            <person name="Ivanova N."/>
            <person name="Francino M.P."/>
            <person name="Chain P."/>
            <person name="Shin M."/>
            <person name="Malfatti S."/>
            <person name="Larimer F."/>
            <person name="Copeland A."/>
            <person name="Detter J.C."/>
            <person name="Land M."/>
            <person name="Richardson P.M."/>
            <person name="Yu X.J."/>
            <person name="Walker D.H."/>
            <person name="McBride J.W."/>
            <person name="Kyrpides N.C."/>
        </authorList>
    </citation>
    <scope>NUCLEOTIDE SEQUENCE [LARGE SCALE GENOMIC DNA]</scope>
    <source>
        <strain>Jake</strain>
    </source>
</reference>
<sequence>MDINKLINMFAKLPNFGPSSSRRIVLHLLRNKEEVMLPLASGIQDLAFQTKECSVCFNIDVKSPCSICSDTKRDHQLLCIVEELGDLWAFEKGKIYQGVYHVLGGTLSAIYGIGPDQLNLDNIVERIKKFDIKEVIIGIGNTMDGQVTTHYITQIVKGLGIKITRLACGIPMGGEIDYLDEGTLSAALSSRYVIS</sequence>
<gene>
    <name evidence="1" type="primary">recR</name>
    <name type="ordered locus">Ecaj_0245</name>
</gene>
<protein>
    <recommendedName>
        <fullName evidence="1">Recombination protein RecR</fullName>
    </recommendedName>
</protein>
<keyword id="KW-0227">DNA damage</keyword>
<keyword id="KW-0233">DNA recombination</keyword>
<keyword id="KW-0234">DNA repair</keyword>
<keyword id="KW-0479">Metal-binding</keyword>
<keyword id="KW-0862">Zinc</keyword>
<keyword id="KW-0863">Zinc-finger</keyword>
<proteinExistence type="inferred from homology"/>
<dbReference type="EMBL" id="CP000107">
    <property type="protein sequence ID" value="AAZ68294.1"/>
    <property type="molecule type" value="Genomic_DNA"/>
</dbReference>
<dbReference type="RefSeq" id="WP_011304372.1">
    <property type="nucleotide sequence ID" value="NC_007354.1"/>
</dbReference>
<dbReference type="SMR" id="Q3YSL1"/>
<dbReference type="FunCoup" id="Q3YSL1">
    <property type="interactions" value="127"/>
</dbReference>
<dbReference type="STRING" id="269484.Ecaj_0245"/>
<dbReference type="KEGG" id="ecn:Ecaj_0245"/>
<dbReference type="eggNOG" id="COG0353">
    <property type="taxonomic scope" value="Bacteria"/>
</dbReference>
<dbReference type="HOGENOM" id="CLU_060739_1_1_5"/>
<dbReference type="InParanoid" id="Q3YSL1"/>
<dbReference type="Proteomes" id="UP000000435">
    <property type="component" value="Chromosome"/>
</dbReference>
<dbReference type="GO" id="GO:0003677">
    <property type="term" value="F:DNA binding"/>
    <property type="evidence" value="ECO:0007669"/>
    <property type="project" value="UniProtKB-UniRule"/>
</dbReference>
<dbReference type="GO" id="GO:0008270">
    <property type="term" value="F:zinc ion binding"/>
    <property type="evidence" value="ECO:0007669"/>
    <property type="project" value="UniProtKB-KW"/>
</dbReference>
<dbReference type="GO" id="GO:0006310">
    <property type="term" value="P:DNA recombination"/>
    <property type="evidence" value="ECO:0007669"/>
    <property type="project" value="UniProtKB-UniRule"/>
</dbReference>
<dbReference type="GO" id="GO:0006281">
    <property type="term" value="P:DNA repair"/>
    <property type="evidence" value="ECO:0007669"/>
    <property type="project" value="UniProtKB-UniRule"/>
</dbReference>
<dbReference type="CDD" id="cd01025">
    <property type="entry name" value="TOPRIM_recR"/>
    <property type="match status" value="1"/>
</dbReference>
<dbReference type="Gene3D" id="3.40.1360.10">
    <property type="match status" value="1"/>
</dbReference>
<dbReference type="Gene3D" id="6.10.250.240">
    <property type="match status" value="1"/>
</dbReference>
<dbReference type="Gene3D" id="1.10.8.420">
    <property type="entry name" value="RecR Domain 1"/>
    <property type="match status" value="1"/>
</dbReference>
<dbReference type="HAMAP" id="MF_00017">
    <property type="entry name" value="RecR"/>
    <property type="match status" value="1"/>
</dbReference>
<dbReference type="InterPro" id="IPR000093">
    <property type="entry name" value="DNA_Rcmb_RecR"/>
</dbReference>
<dbReference type="InterPro" id="IPR023627">
    <property type="entry name" value="Rcmb_RecR"/>
</dbReference>
<dbReference type="InterPro" id="IPR015967">
    <property type="entry name" value="Rcmb_RecR_Znf"/>
</dbReference>
<dbReference type="InterPro" id="IPR006171">
    <property type="entry name" value="TOPRIM_dom"/>
</dbReference>
<dbReference type="InterPro" id="IPR034137">
    <property type="entry name" value="TOPRIM_RecR"/>
</dbReference>
<dbReference type="NCBIfam" id="TIGR00615">
    <property type="entry name" value="recR"/>
    <property type="match status" value="1"/>
</dbReference>
<dbReference type="PANTHER" id="PTHR30446">
    <property type="entry name" value="RECOMBINATION PROTEIN RECR"/>
    <property type="match status" value="1"/>
</dbReference>
<dbReference type="PANTHER" id="PTHR30446:SF0">
    <property type="entry name" value="RECOMBINATION PROTEIN RECR"/>
    <property type="match status" value="1"/>
</dbReference>
<dbReference type="Pfam" id="PF21175">
    <property type="entry name" value="RecR_C"/>
    <property type="match status" value="1"/>
</dbReference>
<dbReference type="Pfam" id="PF21176">
    <property type="entry name" value="RecR_HhH"/>
    <property type="match status" value="1"/>
</dbReference>
<dbReference type="Pfam" id="PF02132">
    <property type="entry name" value="RecR_ZnF"/>
    <property type="match status" value="1"/>
</dbReference>
<dbReference type="Pfam" id="PF13662">
    <property type="entry name" value="Toprim_4"/>
    <property type="match status" value="1"/>
</dbReference>
<dbReference type="SUPFAM" id="SSF111304">
    <property type="entry name" value="Recombination protein RecR"/>
    <property type="match status" value="1"/>
</dbReference>
<dbReference type="PROSITE" id="PS01300">
    <property type="entry name" value="RECR"/>
    <property type="match status" value="1"/>
</dbReference>
<dbReference type="PROSITE" id="PS50880">
    <property type="entry name" value="TOPRIM"/>
    <property type="match status" value="1"/>
</dbReference>
<organism>
    <name type="scientific">Ehrlichia canis (strain Jake)</name>
    <dbReference type="NCBI Taxonomy" id="269484"/>
    <lineage>
        <taxon>Bacteria</taxon>
        <taxon>Pseudomonadati</taxon>
        <taxon>Pseudomonadota</taxon>
        <taxon>Alphaproteobacteria</taxon>
        <taxon>Rickettsiales</taxon>
        <taxon>Anaplasmataceae</taxon>
        <taxon>Ehrlichia</taxon>
    </lineage>
</organism>
<comment type="function">
    <text evidence="1">May play a role in DNA repair. It seems to be involved in an RecBC-independent recombinational process of DNA repair. It may act with RecF and RecO.</text>
</comment>
<comment type="similarity">
    <text evidence="1">Belongs to the RecR family.</text>
</comment>
<accession>Q3YSL1</accession>
<name>RECR_EHRCJ</name>